<dbReference type="EC" id="2.2.1.9" evidence="1"/>
<dbReference type="EMBL" id="L42023">
    <property type="protein sequence ID" value="AAC21946.1"/>
    <property type="molecule type" value="Genomic_DNA"/>
</dbReference>
<dbReference type="PIR" id="D64059">
    <property type="entry name" value="D64059"/>
</dbReference>
<dbReference type="RefSeq" id="NP_438451.1">
    <property type="nucleotide sequence ID" value="NC_000907.1"/>
</dbReference>
<dbReference type="SMR" id="P44612"/>
<dbReference type="STRING" id="71421.HI_0283"/>
<dbReference type="DNASU" id="949474"/>
<dbReference type="EnsemblBacteria" id="AAC21946">
    <property type="protein sequence ID" value="AAC21946"/>
    <property type="gene ID" value="HI_0283"/>
</dbReference>
<dbReference type="KEGG" id="hin:HI_0283"/>
<dbReference type="PATRIC" id="fig|71421.8.peg.299"/>
<dbReference type="eggNOG" id="COG1165">
    <property type="taxonomic scope" value="Bacteria"/>
</dbReference>
<dbReference type="HOGENOM" id="CLU_006051_3_0_6"/>
<dbReference type="OrthoDB" id="9791859at2"/>
<dbReference type="PhylomeDB" id="P44612"/>
<dbReference type="BioCyc" id="HINF71421:G1GJ1-302-MONOMER"/>
<dbReference type="UniPathway" id="UPA00079"/>
<dbReference type="UniPathway" id="UPA01057">
    <property type="reaction ID" value="UER00164"/>
</dbReference>
<dbReference type="Proteomes" id="UP000000579">
    <property type="component" value="Chromosome"/>
</dbReference>
<dbReference type="GO" id="GO:0070204">
    <property type="term" value="F:2-succinyl-5-enolpyruvyl-6-hydroxy-3-cyclohexene-1-carboxylic-acid synthase activity"/>
    <property type="evidence" value="ECO:0007669"/>
    <property type="project" value="UniProtKB-UniRule"/>
</dbReference>
<dbReference type="GO" id="GO:0000287">
    <property type="term" value="F:magnesium ion binding"/>
    <property type="evidence" value="ECO:0007669"/>
    <property type="project" value="UniProtKB-UniRule"/>
</dbReference>
<dbReference type="GO" id="GO:0030145">
    <property type="term" value="F:manganese ion binding"/>
    <property type="evidence" value="ECO:0007669"/>
    <property type="project" value="UniProtKB-UniRule"/>
</dbReference>
<dbReference type="GO" id="GO:0030976">
    <property type="term" value="F:thiamine pyrophosphate binding"/>
    <property type="evidence" value="ECO:0007669"/>
    <property type="project" value="UniProtKB-UniRule"/>
</dbReference>
<dbReference type="GO" id="GO:0009234">
    <property type="term" value="P:menaquinone biosynthetic process"/>
    <property type="evidence" value="ECO:0007669"/>
    <property type="project" value="UniProtKB-UniRule"/>
</dbReference>
<dbReference type="CDD" id="cd07037">
    <property type="entry name" value="TPP_PYR_MenD"/>
    <property type="match status" value="1"/>
</dbReference>
<dbReference type="CDD" id="cd02009">
    <property type="entry name" value="TPP_SHCHC_synthase"/>
    <property type="match status" value="1"/>
</dbReference>
<dbReference type="Gene3D" id="3.40.50.970">
    <property type="match status" value="2"/>
</dbReference>
<dbReference type="Gene3D" id="3.40.50.1220">
    <property type="entry name" value="TPP-binding domain"/>
    <property type="match status" value="1"/>
</dbReference>
<dbReference type="HAMAP" id="MF_01659">
    <property type="entry name" value="MenD"/>
    <property type="match status" value="1"/>
</dbReference>
<dbReference type="InterPro" id="IPR004433">
    <property type="entry name" value="MenaQ_synth_MenD"/>
</dbReference>
<dbReference type="InterPro" id="IPR032264">
    <property type="entry name" value="MenD_middle"/>
</dbReference>
<dbReference type="InterPro" id="IPR029061">
    <property type="entry name" value="THDP-binding"/>
</dbReference>
<dbReference type="InterPro" id="IPR012001">
    <property type="entry name" value="Thiamin_PyroP_enz_TPP-bd_dom"/>
</dbReference>
<dbReference type="InterPro" id="IPR011766">
    <property type="entry name" value="TPP_enzyme_TPP-bd"/>
</dbReference>
<dbReference type="NCBIfam" id="TIGR00173">
    <property type="entry name" value="menD"/>
    <property type="match status" value="1"/>
</dbReference>
<dbReference type="PANTHER" id="PTHR42916">
    <property type="entry name" value="2-SUCCINYL-5-ENOLPYRUVYL-6-HYDROXY-3-CYCLOHEXENE-1-CARBOXYLATE SYNTHASE"/>
    <property type="match status" value="1"/>
</dbReference>
<dbReference type="PANTHER" id="PTHR42916:SF1">
    <property type="entry name" value="PROTEIN PHYLLO, CHLOROPLASTIC"/>
    <property type="match status" value="1"/>
</dbReference>
<dbReference type="Pfam" id="PF02775">
    <property type="entry name" value="TPP_enzyme_C"/>
    <property type="match status" value="1"/>
</dbReference>
<dbReference type="Pfam" id="PF16582">
    <property type="entry name" value="TPP_enzyme_M_2"/>
    <property type="match status" value="1"/>
</dbReference>
<dbReference type="Pfam" id="PF02776">
    <property type="entry name" value="TPP_enzyme_N"/>
    <property type="match status" value="1"/>
</dbReference>
<dbReference type="PIRSF" id="PIRSF004983">
    <property type="entry name" value="MenD"/>
    <property type="match status" value="1"/>
</dbReference>
<dbReference type="SUPFAM" id="SSF52518">
    <property type="entry name" value="Thiamin diphosphate-binding fold (THDP-binding)"/>
    <property type="match status" value="2"/>
</dbReference>
<gene>
    <name evidence="1" type="primary">menD</name>
    <name type="ordered locus">HI_0283</name>
</gene>
<feature type="chain" id="PRO_0000090830" description="2-succinyl-5-enolpyruvyl-6-hydroxy-3-cyclohexene-1-carboxylate synthase">
    <location>
        <begin position="1"/>
        <end position="568"/>
    </location>
</feature>
<reference key="1">
    <citation type="journal article" date="1995" name="Science">
        <title>Whole-genome random sequencing and assembly of Haemophilus influenzae Rd.</title>
        <authorList>
            <person name="Fleischmann R.D."/>
            <person name="Adams M.D."/>
            <person name="White O."/>
            <person name="Clayton R.A."/>
            <person name="Kirkness E.F."/>
            <person name="Kerlavage A.R."/>
            <person name="Bult C.J."/>
            <person name="Tomb J.-F."/>
            <person name="Dougherty B.A."/>
            <person name="Merrick J.M."/>
            <person name="McKenney K."/>
            <person name="Sutton G.G."/>
            <person name="FitzHugh W."/>
            <person name="Fields C.A."/>
            <person name="Gocayne J.D."/>
            <person name="Scott J.D."/>
            <person name="Shirley R."/>
            <person name="Liu L.-I."/>
            <person name="Glodek A."/>
            <person name="Kelley J.M."/>
            <person name="Weidman J.F."/>
            <person name="Phillips C.A."/>
            <person name="Spriggs T."/>
            <person name="Hedblom E."/>
            <person name="Cotton M.D."/>
            <person name="Utterback T.R."/>
            <person name="Hanna M.C."/>
            <person name="Nguyen D.T."/>
            <person name="Saudek D.M."/>
            <person name="Brandon R.C."/>
            <person name="Fine L.D."/>
            <person name="Fritchman J.L."/>
            <person name="Fuhrmann J.L."/>
            <person name="Geoghagen N.S.M."/>
            <person name="Gnehm C.L."/>
            <person name="McDonald L.A."/>
            <person name="Small K.V."/>
            <person name="Fraser C.M."/>
            <person name="Smith H.O."/>
            <person name="Venter J.C."/>
        </authorList>
    </citation>
    <scope>NUCLEOTIDE SEQUENCE [LARGE SCALE GENOMIC DNA]</scope>
    <source>
        <strain>ATCC 51907 / DSM 11121 / KW20 / Rd</strain>
    </source>
</reference>
<accession>P44612</accession>
<name>MEND_HAEIN</name>
<protein>
    <recommendedName>
        <fullName evidence="1">2-succinyl-5-enolpyruvyl-6-hydroxy-3-cyclohexene-1-carboxylate synthase</fullName>
        <shortName evidence="1">SEPHCHC synthase</shortName>
        <ecNumber evidence="1">2.2.1.9</ecNumber>
    </recommendedName>
    <alternativeName>
        <fullName evidence="1">Menaquinone biosynthesis protein MenD</fullName>
    </alternativeName>
</protein>
<sequence length="568" mass="63097">MSVSVFNRCWSKVILETLVRQGVSHLCIAPGSRSTPLTLEAVRLQNAGAVTCHTHFDERGLGFFALGIAKATQSPVAIIVTSGTATANLYPAIIEARQTGVNLFVLTADRPPELWECGANQAILQQNMFGQYPVANVNLPKPNADYSAQWLISLLEQAVFQQKQQGGVVHINVPFAEPLYDATDEEVNSHSWLQPLQRWLIQNKSWINVEAQQNEVLMHENWDHWRTKRGVVVVGQLPAEQAMGINSWASAMGWVLLTDIQSGVVPTTPYEDIWLANQTVREKLLQADIVIQFGARFISKRINQFLQAFKGEFWLVEQSGKALDPYHHSLTRFNAKVHHWLRAHPPLRQKPWLLEPLALSKFCATFIEQQVGGNLTEASLALRLPTLLPYNGVLFLGNSLLVRLVDALTQLPESYPVYTNRGASGIDGLLATAAGIGIGSNKPVVAVIGDTSTLYDLNSFALFKNVTQPTLIFVINNNGGAIFDMLPVDEQVKDQFYRLPHNGDFSQIAAMFDLKYAHPYTWADLNSVVKQAYSRRKATLIEIKTNPSDGSSLYKRLIEQISHAVIGA</sequence>
<proteinExistence type="inferred from homology"/>
<keyword id="KW-0460">Magnesium</keyword>
<keyword id="KW-0464">Manganese</keyword>
<keyword id="KW-0474">Menaquinone biosynthesis</keyword>
<keyword id="KW-0479">Metal-binding</keyword>
<keyword id="KW-1185">Reference proteome</keyword>
<keyword id="KW-0786">Thiamine pyrophosphate</keyword>
<keyword id="KW-0808">Transferase</keyword>
<evidence type="ECO:0000255" key="1">
    <source>
        <dbReference type="HAMAP-Rule" id="MF_01659"/>
    </source>
</evidence>
<organism>
    <name type="scientific">Haemophilus influenzae (strain ATCC 51907 / DSM 11121 / KW20 / Rd)</name>
    <dbReference type="NCBI Taxonomy" id="71421"/>
    <lineage>
        <taxon>Bacteria</taxon>
        <taxon>Pseudomonadati</taxon>
        <taxon>Pseudomonadota</taxon>
        <taxon>Gammaproteobacteria</taxon>
        <taxon>Pasteurellales</taxon>
        <taxon>Pasteurellaceae</taxon>
        <taxon>Haemophilus</taxon>
    </lineage>
</organism>
<comment type="function">
    <text evidence="1">Catalyzes the thiamine diphosphate-dependent decarboxylation of 2-oxoglutarate and the subsequent addition of the resulting succinic semialdehyde-thiamine pyrophosphate anion to isochorismate to yield 2-succinyl-5-enolpyruvyl-6-hydroxy-3-cyclohexene-1-carboxylate (SEPHCHC).</text>
</comment>
<comment type="catalytic activity">
    <reaction evidence="1">
        <text>isochorismate + 2-oxoglutarate + H(+) = 5-enolpyruvoyl-6-hydroxy-2-succinyl-cyclohex-3-ene-1-carboxylate + CO2</text>
        <dbReference type="Rhea" id="RHEA:25593"/>
        <dbReference type="ChEBI" id="CHEBI:15378"/>
        <dbReference type="ChEBI" id="CHEBI:16526"/>
        <dbReference type="ChEBI" id="CHEBI:16810"/>
        <dbReference type="ChEBI" id="CHEBI:29780"/>
        <dbReference type="ChEBI" id="CHEBI:58818"/>
        <dbReference type="EC" id="2.2.1.9"/>
    </reaction>
</comment>
<comment type="cofactor">
    <cofactor evidence="1">
        <name>Mg(2+)</name>
        <dbReference type="ChEBI" id="CHEBI:18420"/>
    </cofactor>
    <cofactor evidence="1">
        <name>Mn(2+)</name>
        <dbReference type="ChEBI" id="CHEBI:29035"/>
    </cofactor>
</comment>
<comment type="cofactor">
    <cofactor evidence="1">
        <name>thiamine diphosphate</name>
        <dbReference type="ChEBI" id="CHEBI:58937"/>
    </cofactor>
    <text evidence="1">Binds 1 thiamine pyrophosphate per subunit.</text>
</comment>
<comment type="pathway">
    <text evidence="1">Quinol/quinone metabolism; 1,4-dihydroxy-2-naphthoate biosynthesis; 1,4-dihydroxy-2-naphthoate from chorismate: step 2/7.</text>
</comment>
<comment type="pathway">
    <text evidence="1">Quinol/quinone metabolism; menaquinone biosynthesis.</text>
</comment>
<comment type="subunit">
    <text evidence="1">Homodimer.</text>
</comment>
<comment type="similarity">
    <text evidence="1">Belongs to the TPP enzyme family. MenD subfamily.</text>
</comment>